<protein>
    <recommendedName>
        <fullName>Sodium-dependent phosphate transport protein 2B</fullName>
        <shortName>Sodium-phosphate transport protein 2B</shortName>
    </recommendedName>
    <alternativeName>
        <fullName>Na(+)-dependent phosphate cotransporter 2B</fullName>
    </alternativeName>
    <alternativeName>
        <fullName>Sodium/phosphate cotransporter 2B</fullName>
        <shortName>Na(+)/Pi cotransporter 2B</shortName>
        <shortName>NaPi-2b</shortName>
    </alternativeName>
    <alternativeName>
        <fullName>Solute carrier family 34 member 2</fullName>
    </alternativeName>
</protein>
<feature type="chain" id="PRO_0000068614" description="Sodium-dependent phosphate transport protein 2B">
    <location>
        <begin position="1"/>
        <end position="697"/>
    </location>
</feature>
<feature type="topological domain" description="Cytoplasmic" evidence="2">
    <location>
        <begin position="1"/>
        <end position="91"/>
    </location>
</feature>
<feature type="transmembrane region" description="Helical; Name=M1" evidence="2">
    <location>
        <begin position="92"/>
        <end position="112"/>
    </location>
</feature>
<feature type="topological domain" description="Extracellular" evidence="2">
    <location>
        <begin position="113"/>
        <end position="136"/>
    </location>
</feature>
<feature type="transmembrane region" description="Helical; Name=M2" evidence="2">
    <location>
        <begin position="137"/>
        <end position="157"/>
    </location>
</feature>
<feature type="topological domain" description="Cytoplasmic" evidence="2">
    <location>
        <begin position="158"/>
        <end position="213"/>
    </location>
</feature>
<feature type="transmembrane region" description="Helical; Name=M3" evidence="2">
    <location>
        <begin position="214"/>
        <end position="234"/>
    </location>
</feature>
<feature type="topological domain" description="Extracellular" evidence="2">
    <location>
        <begin position="235"/>
        <end position="363"/>
    </location>
</feature>
<feature type="transmembrane region" description="Helical; Name=M4" evidence="2">
    <location>
        <begin position="364"/>
        <end position="384"/>
    </location>
</feature>
<feature type="topological domain" description="Cytoplasmic" evidence="2">
    <location>
        <begin position="385"/>
        <end position="408"/>
    </location>
</feature>
<feature type="transmembrane region" description="Helical; Name=M5" evidence="2">
    <location>
        <begin position="409"/>
        <end position="429"/>
    </location>
</feature>
<feature type="topological domain" description="Extracellular" evidence="2">
    <location>
        <begin position="430"/>
        <end position="486"/>
    </location>
</feature>
<feature type="transmembrane region" description="Helical; Name=M6" evidence="2">
    <location>
        <begin position="487"/>
        <end position="507"/>
    </location>
</feature>
<feature type="topological domain" description="Cytoplasmic" evidence="2">
    <location>
        <begin position="508"/>
        <end position="526"/>
    </location>
</feature>
<feature type="transmembrane region" description="Helical; Name=M7" evidence="2">
    <location>
        <begin position="527"/>
        <end position="547"/>
    </location>
</feature>
<feature type="topological domain" description="Extracellular" evidence="2">
    <location>
        <begin position="548"/>
        <end position="551"/>
    </location>
</feature>
<feature type="transmembrane region" description="Helical; Name=M8" evidence="2">
    <location>
        <begin position="552"/>
        <end position="572"/>
    </location>
</feature>
<feature type="topological domain" description="Cytoplasmic" evidence="2">
    <location>
        <begin position="573"/>
        <end position="696"/>
    </location>
</feature>
<feature type="region of interest" description="Disordered" evidence="3">
    <location>
        <begin position="1"/>
        <end position="45"/>
    </location>
</feature>
<feature type="glycosylation site" description="N-linked (GlcNAc...) asparagine" evidence="2">
    <location>
        <position position="295"/>
    </location>
</feature>
<feature type="glycosylation site" description="N-linked (GlcNAc...) asparagine" evidence="2">
    <location>
        <position position="308"/>
    </location>
</feature>
<feature type="glycosylation site" description="N-linked (GlcNAc...) asparagine" evidence="2">
    <location>
        <position position="321"/>
    </location>
</feature>
<feature type="glycosylation site" description="N-linked (GlcNAc...) asparagine" evidence="2">
    <location>
        <position position="356"/>
    </location>
</feature>
<feature type="disulfide bond" evidence="1">
    <location>
        <begin position="303"/>
        <end position="350"/>
    </location>
</feature>
<feature type="sequence conflict" description="In Ref. 1; AAC80007." evidence="7" ref="1">
    <original>K</original>
    <variation>R</variation>
    <location>
        <position position="81"/>
    </location>
</feature>
<feature type="sequence conflict" description="In Ref. 1; AAC80007." evidence="7" ref="1">
    <original>V</original>
    <variation>L</variation>
    <location>
        <position position="155"/>
    </location>
</feature>
<feature type="sequence conflict" description="In Ref. 1." evidence="7" ref="1">
    <location>
        <position position="622"/>
    </location>
</feature>
<proteinExistence type="evidence at protein level"/>
<organism>
    <name type="scientific">Mus musculus</name>
    <name type="common">Mouse</name>
    <dbReference type="NCBI Taxonomy" id="10090"/>
    <lineage>
        <taxon>Eukaryota</taxon>
        <taxon>Metazoa</taxon>
        <taxon>Chordata</taxon>
        <taxon>Craniata</taxon>
        <taxon>Vertebrata</taxon>
        <taxon>Euteleostomi</taxon>
        <taxon>Mammalia</taxon>
        <taxon>Eutheria</taxon>
        <taxon>Euarchontoglires</taxon>
        <taxon>Glires</taxon>
        <taxon>Rodentia</taxon>
        <taxon>Myomorpha</taxon>
        <taxon>Muroidea</taxon>
        <taxon>Muridae</taxon>
        <taxon>Murinae</taxon>
        <taxon>Mus</taxon>
        <taxon>Mus</taxon>
    </lineage>
</organism>
<sequence>MAPWPELENAQPNPGKFIEGASGPQSSIPAKDKEASKTNDNGTPVAKTELLPSYSALVLIEEHPEGTDPWDLPELQDTGIKWSERDTKGKTLCIFQGVGKFILLLGFLYLFVCSLDVLSSAFQLVGGKVAGQFFSNNSIMSNPVAGLVIGVLVTVMVQSSSTSSSIIVSMVASSLLTVRAAIPIIMGANIGTSITNTIVALMQAGDRNEFRRAFAGATVHDFFNWLSVFVLLPLEAATHYLEILTNLVLETFKFQNGEDAPDILKVITDPFTKLIIQLDKKVIQQIAMGDSAAQNKSLIKIWCKSITNVTEMNVTVPSTDNCTSPSYCWTDGIQTWTIQNVTQKENIAKCQHIFVNFSLPDLAVGIILLTVSLVVLCGCLIMIVKLLGSVLRGQVATVIKKTLNTDFPFPFAWLTGYLAILVGAGMTFIVQSSSVFTSAMTPLIGIGVISIERAYPLTLGSNIGTTTTAILAALASPGNTLRSSLQIALCHFFFNISGILLWYPIPFTRLPIRLAKGLGNISAKYRWFAVFYLIFFFFVTPLTVFGLSLAGWPVLVGVGVPIILLLLLVLCLRMLQFRCPRILPLKLRDWNFLPLWMHSLKPWDNVISLATTCFQRRCCCCCRVCCRVCCMVCGCKCCRCSKCCRDQGEEEEEKEQDIPVKASGAFDNAAMSKECQDEGKGQVEVLSMKALSNTTVF</sequence>
<keyword id="KW-1003">Cell membrane</keyword>
<keyword id="KW-1015">Disulfide bond</keyword>
<keyword id="KW-0325">Glycoprotein</keyword>
<keyword id="KW-0406">Ion transport</keyword>
<keyword id="KW-0472">Membrane</keyword>
<keyword id="KW-1185">Reference proteome</keyword>
<keyword id="KW-0915">Sodium</keyword>
<keyword id="KW-0739">Sodium transport</keyword>
<keyword id="KW-0769">Symport</keyword>
<keyword id="KW-0812">Transmembrane</keyword>
<keyword id="KW-1133">Transmembrane helix</keyword>
<keyword id="KW-0813">Transport</keyword>
<accession>Q9DBP0</accession>
<accession>Q9Z290</accession>
<dbReference type="EMBL" id="AF081499">
    <property type="protein sequence ID" value="AAC80007.1"/>
    <property type="molecule type" value="mRNA"/>
</dbReference>
<dbReference type="EMBL" id="AK004832">
    <property type="protein sequence ID" value="BAB23600.1"/>
    <property type="molecule type" value="mRNA"/>
</dbReference>
<dbReference type="EMBL" id="AK145599">
    <property type="protein sequence ID" value="BAE26533.1"/>
    <property type="molecule type" value="mRNA"/>
</dbReference>
<dbReference type="EMBL" id="BC096369">
    <property type="protein sequence ID" value="AAH96369.1"/>
    <property type="molecule type" value="mRNA"/>
</dbReference>
<dbReference type="CCDS" id="CCDS19291.1"/>
<dbReference type="RefSeq" id="NP_035532.2">
    <property type="nucleotide sequence ID" value="NM_011402.3"/>
</dbReference>
<dbReference type="SMR" id="Q9DBP0"/>
<dbReference type="BioGRID" id="203310">
    <property type="interactions" value="2"/>
</dbReference>
<dbReference type="FunCoup" id="Q9DBP0">
    <property type="interactions" value="41"/>
</dbReference>
<dbReference type="STRING" id="10090.ENSMUSP00000092380"/>
<dbReference type="GlyCosmos" id="Q9DBP0">
    <property type="glycosylation" value="4 sites, No reported glycans"/>
</dbReference>
<dbReference type="GlyGen" id="Q9DBP0">
    <property type="glycosylation" value="4 sites"/>
</dbReference>
<dbReference type="iPTMnet" id="Q9DBP0"/>
<dbReference type="PhosphoSitePlus" id="Q9DBP0"/>
<dbReference type="SwissPalm" id="Q9DBP0"/>
<dbReference type="jPOST" id="Q9DBP0"/>
<dbReference type="PaxDb" id="10090-ENSMUSP00000092380"/>
<dbReference type="ProteomicsDB" id="293957"/>
<dbReference type="Antibodypedia" id="51936">
    <property type="antibodies" value="163 antibodies from 26 providers"/>
</dbReference>
<dbReference type="DNASU" id="20531"/>
<dbReference type="Ensembl" id="ENSMUST00000094787.8">
    <property type="protein sequence ID" value="ENSMUSP00000092380.5"/>
    <property type="gene ID" value="ENSMUSG00000029188.15"/>
</dbReference>
<dbReference type="GeneID" id="20531"/>
<dbReference type="KEGG" id="mmu:20531"/>
<dbReference type="UCSC" id="uc008xla.2">
    <property type="organism name" value="mouse"/>
</dbReference>
<dbReference type="AGR" id="MGI:1342284"/>
<dbReference type="CTD" id="10568"/>
<dbReference type="MGI" id="MGI:1342284">
    <property type="gene designation" value="Slc34a2"/>
</dbReference>
<dbReference type="VEuPathDB" id="HostDB:ENSMUSG00000029188"/>
<dbReference type="eggNOG" id="ENOG502QQ3I">
    <property type="taxonomic scope" value="Eukaryota"/>
</dbReference>
<dbReference type="GeneTree" id="ENSGT00950000183177"/>
<dbReference type="HOGENOM" id="CLU_025063_0_0_1"/>
<dbReference type="InParanoid" id="Q9DBP0"/>
<dbReference type="OMA" id="GCPKCCR"/>
<dbReference type="OrthoDB" id="76259at2759"/>
<dbReference type="PhylomeDB" id="Q9DBP0"/>
<dbReference type="TreeFam" id="TF313981"/>
<dbReference type="Reactome" id="R-MMU-427589">
    <property type="pathway name" value="Type II Na+/Pi cotransporters"/>
</dbReference>
<dbReference type="Reactome" id="R-MMU-5683826">
    <property type="pathway name" value="Surfactant metabolism"/>
</dbReference>
<dbReference type="BioGRID-ORCS" id="20531">
    <property type="hits" value="0 hits in 81 CRISPR screens"/>
</dbReference>
<dbReference type="PRO" id="PR:Q9DBP0"/>
<dbReference type="Proteomes" id="UP000000589">
    <property type="component" value="Chromosome 5"/>
</dbReference>
<dbReference type="RNAct" id="Q9DBP0">
    <property type="molecule type" value="protein"/>
</dbReference>
<dbReference type="Bgee" id="ENSMUSG00000029188">
    <property type="expression patterns" value="Expressed in left lung and 83 other cell types or tissues"/>
</dbReference>
<dbReference type="ExpressionAtlas" id="Q9DBP0">
    <property type="expression patterns" value="baseline and differential"/>
</dbReference>
<dbReference type="GO" id="GO:0016324">
    <property type="term" value="C:apical plasma membrane"/>
    <property type="evidence" value="ECO:0000314"/>
    <property type="project" value="UniProtKB"/>
</dbReference>
<dbReference type="GO" id="GO:0005903">
    <property type="term" value="C:brush border"/>
    <property type="evidence" value="ECO:0000314"/>
    <property type="project" value="MGI"/>
</dbReference>
<dbReference type="GO" id="GO:0042301">
    <property type="term" value="F:phosphate ion binding"/>
    <property type="evidence" value="ECO:0007669"/>
    <property type="project" value="Ensembl"/>
</dbReference>
<dbReference type="GO" id="GO:0031402">
    <property type="term" value="F:sodium ion binding"/>
    <property type="evidence" value="ECO:0007669"/>
    <property type="project" value="Ensembl"/>
</dbReference>
<dbReference type="GO" id="GO:0005436">
    <property type="term" value="F:sodium:phosphate symporter activity"/>
    <property type="evidence" value="ECO:0000314"/>
    <property type="project" value="UniProtKB"/>
</dbReference>
<dbReference type="GO" id="GO:0001701">
    <property type="term" value="P:in utero embryonic development"/>
    <property type="evidence" value="ECO:0000315"/>
    <property type="project" value="MGI"/>
</dbReference>
<dbReference type="GO" id="GO:0030643">
    <property type="term" value="P:intracellular phosphate ion homeostasis"/>
    <property type="evidence" value="ECO:0007669"/>
    <property type="project" value="Ensembl"/>
</dbReference>
<dbReference type="GO" id="GO:0006817">
    <property type="term" value="P:phosphate ion transport"/>
    <property type="evidence" value="ECO:0000314"/>
    <property type="project" value="MGI"/>
</dbReference>
<dbReference type="GO" id="GO:0043627">
    <property type="term" value="P:response to estrogen"/>
    <property type="evidence" value="ECO:0007669"/>
    <property type="project" value="Ensembl"/>
</dbReference>
<dbReference type="GO" id="GO:0044341">
    <property type="term" value="P:sodium-dependent phosphate transport"/>
    <property type="evidence" value="ECO:0007669"/>
    <property type="project" value="InterPro"/>
</dbReference>
<dbReference type="InterPro" id="IPR003841">
    <property type="entry name" value="Na/Pi_transpt"/>
</dbReference>
<dbReference type="NCBIfam" id="TIGR01013">
    <property type="entry name" value="2a58"/>
    <property type="match status" value="1"/>
</dbReference>
<dbReference type="NCBIfam" id="NF037997">
    <property type="entry name" value="Na_Pi_symport"/>
    <property type="match status" value="1"/>
</dbReference>
<dbReference type="PANTHER" id="PTHR10010:SF23">
    <property type="entry name" value="SODIUM-DEPENDENT PHOSPHATE TRANSPORT PROTEIN 2B"/>
    <property type="match status" value="1"/>
</dbReference>
<dbReference type="PANTHER" id="PTHR10010">
    <property type="entry name" value="SOLUTE CARRIER FAMILY 34 SODIUM PHOSPHATE , MEMBER 2-RELATED"/>
    <property type="match status" value="1"/>
</dbReference>
<dbReference type="Pfam" id="PF02690">
    <property type="entry name" value="Na_Pi_cotrans"/>
    <property type="match status" value="2"/>
</dbReference>
<gene>
    <name type="primary">Slc34a2</name>
    <name type="synonym">Npt2b</name>
</gene>
<comment type="function">
    <text evidence="4 5 6">Involved in actively transporting phosphate into cells via Na(+) cotransport.</text>
</comment>
<comment type="catalytic activity">
    <reaction evidence="4 5 6">
        <text>3 Na(+)(out) + phosphate(out) = 3 Na(+)(in) + phosphate(in)</text>
        <dbReference type="Rhea" id="RHEA:71255"/>
        <dbReference type="ChEBI" id="CHEBI:29101"/>
        <dbReference type="ChEBI" id="CHEBI:43474"/>
    </reaction>
    <physiologicalReaction direction="left-to-right" evidence="8">
        <dbReference type="Rhea" id="RHEA:71256"/>
    </physiologicalReaction>
</comment>
<comment type="biophysicochemical properties">
    <kinetics>
        <KM evidence="6">50 mM for phosphate</KM>
        <KM evidence="6">33 mM for sodium</KM>
    </kinetics>
    <phDependence>
        <text evidence="6">Optimum pH is 6.0.</text>
    </phDependence>
</comment>
<comment type="subcellular location">
    <subcellularLocation>
        <location evidence="4 5 6">Apical cell membrane</location>
        <topology evidence="2">Multi-pass membrane protein</topology>
    </subcellularLocation>
    <text evidence="4 5 6">Localized at the brush border membranes of enterocytes.</text>
</comment>
<comment type="tissue specificity">
    <text evidence="4 5 6">Highly abundant in the ileum of small intestine, whereas it is almost absent in the duodenum and in the jejunum.</text>
</comment>
<comment type="induction">
    <text evidence="4 5">Up-regulated in the entire small intestine by low-phosphate diet. Up-regulated by metabolic acidosis.</text>
</comment>
<comment type="similarity">
    <text evidence="7">Belongs to the SLC34A transporter family.</text>
</comment>
<evidence type="ECO:0000250" key="1">
    <source>
        <dbReference type="UniProtKB" id="Q06496"/>
    </source>
</evidence>
<evidence type="ECO:0000255" key="2"/>
<evidence type="ECO:0000256" key="3">
    <source>
        <dbReference type="SAM" id="MobiDB-lite"/>
    </source>
</evidence>
<evidence type="ECO:0000269" key="4">
    <source>
    </source>
</evidence>
<evidence type="ECO:0000269" key="5">
    <source>
    </source>
</evidence>
<evidence type="ECO:0000269" key="6">
    <source>
    </source>
</evidence>
<evidence type="ECO:0000305" key="7"/>
<evidence type="ECO:0000305" key="8">
    <source>
    </source>
</evidence>
<reference key="1">
    <citation type="journal article" date="1998" name="Proc. Natl. Acad. Sci. U.S.A.">
        <title>Characterization of a murine type II sodium-phosphate cotransporter expressed in mammalian small intestine.</title>
        <authorList>
            <person name="Hilfiker H."/>
            <person name="Hattenhauer O."/>
            <person name="Traebert M."/>
            <person name="Forster I.C."/>
            <person name="Murer H."/>
            <person name="Biber J."/>
        </authorList>
    </citation>
    <scope>NUCLEOTIDE SEQUENCE [MRNA]</scope>
    <scope>FUNCTION</scope>
    <scope>TRANSPORTER ACTIVITY</scope>
    <scope>BIOPHYSICOCHEMICAL PROPERTIES</scope>
    <scope>TISSUE SPECIFICITY</scope>
    <scope>SUBCELLULAR LOCATION</scope>
    <source>
        <strain>NMRI</strain>
        <tissue>Small intestine</tissue>
    </source>
</reference>
<reference key="2">
    <citation type="journal article" date="2005" name="Science">
        <title>The transcriptional landscape of the mammalian genome.</title>
        <authorList>
            <person name="Carninci P."/>
            <person name="Kasukawa T."/>
            <person name="Katayama S."/>
            <person name="Gough J."/>
            <person name="Frith M.C."/>
            <person name="Maeda N."/>
            <person name="Oyama R."/>
            <person name="Ravasi T."/>
            <person name="Lenhard B."/>
            <person name="Wells C."/>
            <person name="Kodzius R."/>
            <person name="Shimokawa K."/>
            <person name="Bajic V.B."/>
            <person name="Brenner S.E."/>
            <person name="Batalov S."/>
            <person name="Forrest A.R."/>
            <person name="Zavolan M."/>
            <person name="Davis M.J."/>
            <person name="Wilming L.G."/>
            <person name="Aidinis V."/>
            <person name="Allen J.E."/>
            <person name="Ambesi-Impiombato A."/>
            <person name="Apweiler R."/>
            <person name="Aturaliya R.N."/>
            <person name="Bailey T.L."/>
            <person name="Bansal M."/>
            <person name="Baxter L."/>
            <person name="Beisel K.W."/>
            <person name="Bersano T."/>
            <person name="Bono H."/>
            <person name="Chalk A.M."/>
            <person name="Chiu K.P."/>
            <person name="Choudhary V."/>
            <person name="Christoffels A."/>
            <person name="Clutterbuck D.R."/>
            <person name="Crowe M.L."/>
            <person name="Dalla E."/>
            <person name="Dalrymple B.P."/>
            <person name="de Bono B."/>
            <person name="Della Gatta G."/>
            <person name="di Bernardo D."/>
            <person name="Down T."/>
            <person name="Engstrom P."/>
            <person name="Fagiolini M."/>
            <person name="Faulkner G."/>
            <person name="Fletcher C.F."/>
            <person name="Fukushima T."/>
            <person name="Furuno M."/>
            <person name="Futaki S."/>
            <person name="Gariboldi M."/>
            <person name="Georgii-Hemming P."/>
            <person name="Gingeras T.R."/>
            <person name="Gojobori T."/>
            <person name="Green R.E."/>
            <person name="Gustincich S."/>
            <person name="Harbers M."/>
            <person name="Hayashi Y."/>
            <person name="Hensch T.K."/>
            <person name="Hirokawa N."/>
            <person name="Hill D."/>
            <person name="Huminiecki L."/>
            <person name="Iacono M."/>
            <person name="Ikeo K."/>
            <person name="Iwama A."/>
            <person name="Ishikawa T."/>
            <person name="Jakt M."/>
            <person name="Kanapin A."/>
            <person name="Katoh M."/>
            <person name="Kawasawa Y."/>
            <person name="Kelso J."/>
            <person name="Kitamura H."/>
            <person name="Kitano H."/>
            <person name="Kollias G."/>
            <person name="Krishnan S.P."/>
            <person name="Kruger A."/>
            <person name="Kummerfeld S.K."/>
            <person name="Kurochkin I.V."/>
            <person name="Lareau L.F."/>
            <person name="Lazarevic D."/>
            <person name="Lipovich L."/>
            <person name="Liu J."/>
            <person name="Liuni S."/>
            <person name="McWilliam S."/>
            <person name="Madan Babu M."/>
            <person name="Madera M."/>
            <person name="Marchionni L."/>
            <person name="Matsuda H."/>
            <person name="Matsuzawa S."/>
            <person name="Miki H."/>
            <person name="Mignone F."/>
            <person name="Miyake S."/>
            <person name="Morris K."/>
            <person name="Mottagui-Tabar S."/>
            <person name="Mulder N."/>
            <person name="Nakano N."/>
            <person name="Nakauchi H."/>
            <person name="Ng P."/>
            <person name="Nilsson R."/>
            <person name="Nishiguchi S."/>
            <person name="Nishikawa S."/>
            <person name="Nori F."/>
            <person name="Ohara O."/>
            <person name="Okazaki Y."/>
            <person name="Orlando V."/>
            <person name="Pang K.C."/>
            <person name="Pavan W.J."/>
            <person name="Pavesi G."/>
            <person name="Pesole G."/>
            <person name="Petrovsky N."/>
            <person name="Piazza S."/>
            <person name="Reed J."/>
            <person name="Reid J.F."/>
            <person name="Ring B.Z."/>
            <person name="Ringwald M."/>
            <person name="Rost B."/>
            <person name="Ruan Y."/>
            <person name="Salzberg S.L."/>
            <person name="Sandelin A."/>
            <person name="Schneider C."/>
            <person name="Schoenbach C."/>
            <person name="Sekiguchi K."/>
            <person name="Semple C.A."/>
            <person name="Seno S."/>
            <person name="Sessa L."/>
            <person name="Sheng Y."/>
            <person name="Shibata Y."/>
            <person name="Shimada H."/>
            <person name="Shimada K."/>
            <person name="Silva D."/>
            <person name="Sinclair B."/>
            <person name="Sperling S."/>
            <person name="Stupka E."/>
            <person name="Sugiura K."/>
            <person name="Sultana R."/>
            <person name="Takenaka Y."/>
            <person name="Taki K."/>
            <person name="Tammoja K."/>
            <person name="Tan S.L."/>
            <person name="Tang S."/>
            <person name="Taylor M.S."/>
            <person name="Tegner J."/>
            <person name="Teichmann S.A."/>
            <person name="Ueda H.R."/>
            <person name="van Nimwegen E."/>
            <person name="Verardo R."/>
            <person name="Wei C.L."/>
            <person name="Yagi K."/>
            <person name="Yamanishi H."/>
            <person name="Zabarovsky E."/>
            <person name="Zhu S."/>
            <person name="Zimmer A."/>
            <person name="Hide W."/>
            <person name="Bult C."/>
            <person name="Grimmond S.M."/>
            <person name="Teasdale R.D."/>
            <person name="Liu E.T."/>
            <person name="Brusic V."/>
            <person name="Quackenbush J."/>
            <person name="Wahlestedt C."/>
            <person name="Mattick J.S."/>
            <person name="Hume D.A."/>
            <person name="Kai C."/>
            <person name="Sasaki D."/>
            <person name="Tomaru Y."/>
            <person name="Fukuda S."/>
            <person name="Kanamori-Katayama M."/>
            <person name="Suzuki M."/>
            <person name="Aoki J."/>
            <person name="Arakawa T."/>
            <person name="Iida J."/>
            <person name="Imamura K."/>
            <person name="Itoh M."/>
            <person name="Kato T."/>
            <person name="Kawaji H."/>
            <person name="Kawagashira N."/>
            <person name="Kawashima T."/>
            <person name="Kojima M."/>
            <person name="Kondo S."/>
            <person name="Konno H."/>
            <person name="Nakano K."/>
            <person name="Ninomiya N."/>
            <person name="Nishio T."/>
            <person name="Okada M."/>
            <person name="Plessy C."/>
            <person name="Shibata K."/>
            <person name="Shiraki T."/>
            <person name="Suzuki S."/>
            <person name="Tagami M."/>
            <person name="Waki K."/>
            <person name="Watahiki A."/>
            <person name="Okamura-Oho Y."/>
            <person name="Suzuki H."/>
            <person name="Kawai J."/>
            <person name="Hayashizaki Y."/>
        </authorList>
    </citation>
    <scope>NUCLEOTIDE SEQUENCE [LARGE SCALE MRNA]</scope>
    <source>
        <strain>C57BL/6J</strain>
        <tissue>Lung</tissue>
    </source>
</reference>
<reference key="3">
    <citation type="journal article" date="2004" name="Genome Res.">
        <title>The status, quality, and expansion of the NIH full-length cDNA project: the Mammalian Gene Collection (MGC).</title>
        <authorList>
            <consortium name="The MGC Project Team"/>
        </authorList>
    </citation>
    <scope>NUCLEOTIDE SEQUENCE [LARGE SCALE MRNA]</scope>
    <source>
        <strain>FVB/N</strain>
        <tissue>Mammary tumor</tissue>
    </source>
</reference>
<reference key="4">
    <citation type="journal article" date="2005" name="Am. J. Physiol.">
        <title>Regulation of intestinal phosphate transport. I. Segmental expression and adaptation to low-P(i) diet of the type IIb Na(+)-P(i) cotransporter in mouse small intestine.</title>
        <authorList>
            <person name="Radanovic T."/>
            <person name="Wagner C.A."/>
            <person name="Murer H."/>
            <person name="Biber J."/>
        </authorList>
    </citation>
    <scope>INDUCTION</scope>
    <scope>TISSUE SPECIFICITY</scope>
    <scope>FUNCTION</scope>
    <scope>TRANSPORTER ACTIVITY</scope>
    <scope>SUBCELLULAR LOCATION</scope>
    <source>
        <strain>NMRI</strain>
    </source>
</reference>
<reference key="5">
    <citation type="journal article" date="2005" name="Am. J. Physiol.">
        <title>Regulation of intestinal phosphate transport. II. Metabolic acidosis stimulates Na(+)-dependent phosphate absorption and expression of the Na(+)-P(i) cotransporter NaPi-IIb in small intestine.</title>
        <authorList>
            <person name="Stauber A."/>
            <person name="Radanovic T."/>
            <person name="Stange G."/>
            <person name="Murer H."/>
            <person name="Wagner C.A."/>
            <person name="Biber J."/>
        </authorList>
    </citation>
    <scope>INDUCTION</scope>
    <scope>FUNCTION</scope>
    <scope>TRANSPORTER ACTIVITY</scope>
    <scope>SUBCELLULAR LOCATION</scope>
    <scope>TISSUE SPECIFICITY</scope>
</reference>
<reference key="6">
    <citation type="journal article" date="2010" name="Cell">
        <title>A tissue-specific atlas of mouse protein phosphorylation and expression.</title>
        <authorList>
            <person name="Huttlin E.L."/>
            <person name="Jedrychowski M.P."/>
            <person name="Elias J.E."/>
            <person name="Goswami T."/>
            <person name="Rad R."/>
            <person name="Beausoleil S.A."/>
            <person name="Villen J."/>
            <person name="Haas W."/>
            <person name="Sowa M.E."/>
            <person name="Gygi S.P."/>
        </authorList>
    </citation>
    <scope>IDENTIFICATION BY MASS SPECTROMETRY [LARGE SCALE ANALYSIS]</scope>
    <source>
        <tissue>Lung</tissue>
    </source>
</reference>
<name>NPT2B_MOUSE</name>